<sequence>MDNMLLAFLLTLFAGLATGVGSLIAFMAKTTNTKFLSFALGLSAGVMIYVSMVDIFFKAKDALTAYLGDTQGYWLTVIAFFGGMLLIGFIDRFIPKYTNPHEVKKVEDMKKPHQPLRDPDLMKMGLFTALALAIHNFPEGIATFVSTLHDPSIGLAIAIAVAIHNIPEGIAVSVPIYYATGDRKKAFKYSFLSGLAEPLGAIVAILILMPFLNDLMFGIIFAMVAGIMVFISLDELLPAARKYDEAHMSMYGVISGMALMAVSLLLLA</sequence>
<reference key="1">
    <citation type="journal article" date="2002" name="Nucleic Acids Res.">
        <title>Genome sequence of Oceanobacillus iheyensis isolated from the Iheya Ridge and its unexpected adaptive capabilities to extreme environments.</title>
        <authorList>
            <person name="Takami H."/>
            <person name="Takaki Y."/>
            <person name="Uchiyama I."/>
        </authorList>
    </citation>
    <scope>NUCLEOTIDE SEQUENCE [LARGE SCALE GENOMIC DNA]</scope>
    <source>
        <strain>DSM 14371 / CIP 107618 / JCM 11309 / KCTC 3954 / HTE831</strain>
    </source>
</reference>
<comment type="function">
    <text evidence="1">Mediates zinc uptake. May also transport other divalent cations.</text>
</comment>
<comment type="catalytic activity">
    <reaction evidence="1">
        <text>Zn(2+)(in) = Zn(2+)(out)</text>
        <dbReference type="Rhea" id="RHEA:29351"/>
        <dbReference type="ChEBI" id="CHEBI:29105"/>
    </reaction>
</comment>
<comment type="subcellular location">
    <subcellularLocation>
        <location evidence="1">Cell membrane</location>
        <topology evidence="1">Multi-pass membrane protein</topology>
    </subcellularLocation>
</comment>
<comment type="similarity">
    <text evidence="1">Belongs to the ZIP transporter (TC 2.A.5) family. ZupT subfamily.</text>
</comment>
<name>ZUPT_OCEIH</name>
<keyword id="KW-1003">Cell membrane</keyword>
<keyword id="KW-0406">Ion transport</keyword>
<keyword id="KW-0408">Iron</keyword>
<keyword id="KW-0472">Membrane</keyword>
<keyword id="KW-0479">Metal-binding</keyword>
<keyword id="KW-1185">Reference proteome</keyword>
<keyword id="KW-0812">Transmembrane</keyword>
<keyword id="KW-1133">Transmembrane helix</keyword>
<keyword id="KW-0813">Transport</keyword>
<keyword id="KW-0862">Zinc</keyword>
<keyword id="KW-0864">Zinc transport</keyword>
<evidence type="ECO:0000255" key="1">
    <source>
        <dbReference type="HAMAP-Rule" id="MF_00548"/>
    </source>
</evidence>
<gene>
    <name evidence="1" type="primary">zupT</name>
    <name type="ordered locus">OB2427</name>
</gene>
<feature type="chain" id="PRO_0000207276" description="Zinc transporter ZupT">
    <location>
        <begin position="1"/>
        <end position="268"/>
    </location>
</feature>
<feature type="transmembrane region" description="Helical" evidence="1">
    <location>
        <begin position="6"/>
        <end position="26"/>
    </location>
</feature>
<feature type="transmembrane region" description="Helical" evidence="1">
    <location>
        <begin position="37"/>
        <end position="57"/>
    </location>
</feature>
<feature type="transmembrane region" description="Helical" evidence="1">
    <location>
        <begin position="70"/>
        <end position="90"/>
    </location>
</feature>
<feature type="transmembrane region" description="Helical" evidence="1">
    <location>
        <begin position="125"/>
        <end position="145"/>
    </location>
</feature>
<feature type="transmembrane region" description="Helical" evidence="1">
    <location>
        <begin position="152"/>
        <end position="172"/>
    </location>
</feature>
<feature type="transmembrane region" description="Helical" evidence="1">
    <location>
        <begin position="201"/>
        <end position="221"/>
    </location>
</feature>
<feature type="transmembrane region" description="Helical" evidence="1">
    <location>
        <begin position="248"/>
        <end position="268"/>
    </location>
</feature>
<feature type="binding site" description="M2 metal binding site" evidence="1">
    <location>
        <position position="136"/>
    </location>
    <ligand>
        <name>Fe(2+)</name>
        <dbReference type="ChEBI" id="CHEBI:29033"/>
    </ligand>
</feature>
<feature type="binding site" description="M2 metal binding site" evidence="1">
    <location>
        <position position="139"/>
    </location>
    <ligand>
        <name>Fe(2+)</name>
        <dbReference type="ChEBI" id="CHEBI:29033"/>
    </ligand>
</feature>
<feature type="binding site" description="M1 metal binding site" evidence="1">
    <location>
        <position position="139"/>
    </location>
    <ligand>
        <name>Zn(2+)</name>
        <dbReference type="ChEBI" id="CHEBI:29105"/>
    </ligand>
</feature>
<feature type="binding site" description="M1 metal binding site" evidence="1">
    <location>
        <position position="164"/>
    </location>
    <ligand>
        <name>Zn(2+)</name>
        <dbReference type="ChEBI" id="CHEBI:29105"/>
    </ligand>
</feature>
<feature type="binding site" description="M2 metal binding site" evidence="1">
    <location>
        <position position="165"/>
    </location>
    <ligand>
        <name>Fe(2+)</name>
        <dbReference type="ChEBI" id="CHEBI:29033"/>
    </ligand>
</feature>
<feature type="binding site" description="M2 metal binding site" evidence="1">
    <location>
        <position position="168"/>
    </location>
    <ligand>
        <name>Fe(2+)</name>
        <dbReference type="ChEBI" id="CHEBI:29033"/>
    </ligand>
</feature>
<feature type="binding site" description="M1 metal binding site" evidence="1">
    <location>
        <position position="168"/>
    </location>
    <ligand>
        <name>Zn(2+)</name>
        <dbReference type="ChEBI" id="CHEBI:29105"/>
    </ligand>
</feature>
<feature type="binding site" description="M2 metal binding site" evidence="1">
    <location>
        <position position="197"/>
    </location>
    <ligand>
        <name>Fe(2+)</name>
        <dbReference type="ChEBI" id="CHEBI:29033"/>
    </ligand>
</feature>
<accession>Q8ENQ1</accession>
<protein>
    <recommendedName>
        <fullName evidence="1">Zinc transporter ZupT</fullName>
    </recommendedName>
</protein>
<proteinExistence type="inferred from homology"/>
<dbReference type="EMBL" id="BA000028">
    <property type="protein sequence ID" value="BAC14383.1"/>
    <property type="molecule type" value="Genomic_DNA"/>
</dbReference>
<dbReference type="RefSeq" id="WP_011066818.1">
    <property type="nucleotide sequence ID" value="NC_004193.1"/>
</dbReference>
<dbReference type="SMR" id="Q8ENQ1"/>
<dbReference type="STRING" id="221109.gene:10734678"/>
<dbReference type="KEGG" id="oih:OB2427"/>
<dbReference type="eggNOG" id="COG0428">
    <property type="taxonomic scope" value="Bacteria"/>
</dbReference>
<dbReference type="HOGENOM" id="CLU_015114_1_3_9"/>
<dbReference type="OrthoDB" id="9787346at2"/>
<dbReference type="PhylomeDB" id="Q8ENQ1"/>
<dbReference type="Proteomes" id="UP000000822">
    <property type="component" value="Chromosome"/>
</dbReference>
<dbReference type="GO" id="GO:0005886">
    <property type="term" value="C:plasma membrane"/>
    <property type="evidence" value="ECO:0007669"/>
    <property type="project" value="UniProtKB-SubCell"/>
</dbReference>
<dbReference type="GO" id="GO:0046872">
    <property type="term" value="F:metal ion binding"/>
    <property type="evidence" value="ECO:0007669"/>
    <property type="project" value="UniProtKB-KW"/>
</dbReference>
<dbReference type="GO" id="GO:0005385">
    <property type="term" value="F:zinc ion transmembrane transporter activity"/>
    <property type="evidence" value="ECO:0007669"/>
    <property type="project" value="UniProtKB-UniRule"/>
</dbReference>
<dbReference type="HAMAP" id="MF_00548">
    <property type="entry name" value="ZupT"/>
    <property type="match status" value="1"/>
</dbReference>
<dbReference type="InterPro" id="IPR003689">
    <property type="entry name" value="ZIP"/>
</dbReference>
<dbReference type="InterPro" id="IPR023498">
    <property type="entry name" value="Zn_transptr_ZupT"/>
</dbReference>
<dbReference type="NCBIfam" id="NF003243">
    <property type="entry name" value="PRK04201.1"/>
    <property type="match status" value="1"/>
</dbReference>
<dbReference type="PANTHER" id="PTHR11040:SF205">
    <property type="entry name" value="ZINC TRANSPORTER ZUPT"/>
    <property type="match status" value="1"/>
</dbReference>
<dbReference type="PANTHER" id="PTHR11040">
    <property type="entry name" value="ZINC/IRON TRANSPORTER"/>
    <property type="match status" value="1"/>
</dbReference>
<dbReference type="Pfam" id="PF02535">
    <property type="entry name" value="Zip"/>
    <property type="match status" value="1"/>
</dbReference>
<organism>
    <name type="scientific">Oceanobacillus iheyensis (strain DSM 14371 / CIP 107618 / JCM 11309 / KCTC 3954 / HTE831)</name>
    <dbReference type="NCBI Taxonomy" id="221109"/>
    <lineage>
        <taxon>Bacteria</taxon>
        <taxon>Bacillati</taxon>
        <taxon>Bacillota</taxon>
        <taxon>Bacilli</taxon>
        <taxon>Bacillales</taxon>
        <taxon>Bacillaceae</taxon>
        <taxon>Oceanobacillus</taxon>
    </lineage>
</organism>